<name>MAK_HUMAN</name>
<protein>
    <recommendedName>
        <fullName>Serine/threonine-protein kinase MAK</fullName>
        <ecNumber evidence="5 10">2.7.11.1</ecNumber>
    </recommendedName>
    <alternativeName>
        <fullName>Male germ cell-associated kinase</fullName>
    </alternativeName>
</protein>
<gene>
    <name type="primary">MAK</name>
</gene>
<reference key="1">
    <citation type="journal article" date="2002" name="J. Biol. Chem.">
        <title>Identification of human male germ cell-associated kinase, a kinase transcriptionally activated by androgen in prostate cancer cells.</title>
        <authorList>
            <person name="Xia L."/>
            <person name="Robinson D."/>
            <person name="Ma A.H."/>
            <person name="Chen H.C."/>
            <person name="Wu F."/>
            <person name="Qiu Y."/>
            <person name="Kung H.J."/>
        </authorList>
    </citation>
    <scope>NUCLEOTIDE SEQUENCE [MRNA] (ISOFORM 1)</scope>
    <scope>FUNCTION</scope>
    <scope>SUBCELLULAR LOCATION</scope>
    <scope>TISSUE SPECIFICITY</scope>
    <scope>INDUCTION</scope>
    <scope>AUTOPHOSPHORYLATION</scope>
    <scope>PHOSPHORYLATION</scope>
    <scope>MUTAGENESIS OF LYS-33</scope>
    <source>
        <tissue>Testis</tissue>
    </source>
</reference>
<reference key="2">
    <citation type="journal article" date="2011" name="Am. J. Hum. Genet.">
        <title>Exome sequencing and cis-regulatory mapping identify mutations in MAK, a gene encoding a regulator of ciliary length, as a cause of retinitis pigmentosa.</title>
        <authorList>
            <person name="Ozgul R.K."/>
            <person name="Siemiatkowska A.M."/>
            <person name="Yucel D."/>
            <person name="Myers C.A."/>
            <person name="Collin R.W."/>
            <person name="Zonneveld M.N."/>
            <person name="Beryozkin A."/>
            <person name="Banin E."/>
            <person name="Hoyng C.B."/>
            <person name="van den Born L.I."/>
            <person name="Bose R."/>
            <person name="Shen W."/>
            <person name="Sharon D."/>
            <person name="Cremers F.P."/>
            <person name="Klevering B.J."/>
            <person name="den Hollander A.I."/>
            <person name="Corbo J.C."/>
        </authorList>
    </citation>
    <scope>NUCLEOTIDE SEQUENCE [MRNA] (ISOFORM 2)</scope>
    <scope>ALTERNATIVE SPLICING (ISOFORM 2)</scope>
    <scope>VARIANTS RP62 SER-13; ARG-27; HIS-130; HIS-166 AND THR-181</scope>
    <scope>CHARACTERIZATION OF VARIANTS RP62 SER-13 AND HIS-130</scope>
    <scope>VARIANT LEU-325</scope>
    <source>
        <tissue>Retina</tissue>
    </source>
</reference>
<reference key="3">
    <citation type="journal article" date="2011" name="Proc. Natl. Acad. Sci. U.S.A.">
        <title>Exome sequencing and analysis of induced pluripotent stem cells identify the cilia-related gene male germ cell-associated kinase (MAK) as a cause of retinitis pigmentosa.</title>
        <authorList>
            <person name="Tucker B.A."/>
            <person name="Scheetz T.E."/>
            <person name="Mullins R.F."/>
            <person name="DeLuca A.P."/>
            <person name="Hoffmann J.M."/>
            <person name="Johnston R.M."/>
            <person name="Jacobson S.G."/>
            <person name="Sheffield V.C."/>
            <person name="Stone E.M."/>
        </authorList>
    </citation>
    <scope>NUCLEOTIDE SEQUENCE [MRNA] (ISOFORM 2)</scope>
    <scope>ALTERNATIVE SPLICING (ISOFORM 2)</scope>
    <scope>SUBCELLULAR LOCATION</scope>
    <scope>TISSUE SPECIFICITY</scope>
    <scope>INVOLVEMENT IN RP62</scope>
    <source>
        <tissue>Retina</tissue>
    </source>
</reference>
<reference key="4">
    <citation type="journal article" date="2011" name="Invest. Ophthalmol. Vis. Sci.">
        <title>Full-length transcriptome analysis of human retina-derived cell lines ARPE-19 and Y79 using the vector-capping method.</title>
        <authorList>
            <person name="Oshikawa M."/>
            <person name="Tsutsui C."/>
            <person name="Ikegami T."/>
            <person name="Fuchida Y."/>
            <person name="Matsubara M."/>
            <person name="Toyama S."/>
            <person name="Usami R."/>
            <person name="Ohtoko K."/>
            <person name="Kato S."/>
        </authorList>
    </citation>
    <scope>NUCLEOTIDE SEQUENCE [LARGE SCALE MRNA] (ISOFORM 3)</scope>
    <source>
        <tissue>Retinoblastoma</tissue>
    </source>
</reference>
<reference key="5">
    <citation type="journal article" date="2003" name="Nature">
        <title>The DNA sequence and analysis of human chromosome 6.</title>
        <authorList>
            <person name="Mungall A.J."/>
            <person name="Palmer S.A."/>
            <person name="Sims S.K."/>
            <person name="Edwards C.A."/>
            <person name="Ashurst J.L."/>
            <person name="Wilming L."/>
            <person name="Jones M.C."/>
            <person name="Horton R."/>
            <person name="Hunt S.E."/>
            <person name="Scott C.E."/>
            <person name="Gilbert J.G.R."/>
            <person name="Clamp M.E."/>
            <person name="Bethel G."/>
            <person name="Milne S."/>
            <person name="Ainscough R."/>
            <person name="Almeida J.P."/>
            <person name="Ambrose K.D."/>
            <person name="Andrews T.D."/>
            <person name="Ashwell R.I.S."/>
            <person name="Babbage A.K."/>
            <person name="Bagguley C.L."/>
            <person name="Bailey J."/>
            <person name="Banerjee R."/>
            <person name="Barker D.J."/>
            <person name="Barlow K.F."/>
            <person name="Bates K."/>
            <person name="Beare D.M."/>
            <person name="Beasley H."/>
            <person name="Beasley O."/>
            <person name="Bird C.P."/>
            <person name="Blakey S.E."/>
            <person name="Bray-Allen S."/>
            <person name="Brook J."/>
            <person name="Brown A.J."/>
            <person name="Brown J.Y."/>
            <person name="Burford D.C."/>
            <person name="Burrill W."/>
            <person name="Burton J."/>
            <person name="Carder C."/>
            <person name="Carter N.P."/>
            <person name="Chapman J.C."/>
            <person name="Clark S.Y."/>
            <person name="Clark G."/>
            <person name="Clee C.M."/>
            <person name="Clegg S."/>
            <person name="Cobley V."/>
            <person name="Collier R.E."/>
            <person name="Collins J.E."/>
            <person name="Colman L.K."/>
            <person name="Corby N.R."/>
            <person name="Coville G.J."/>
            <person name="Culley K.M."/>
            <person name="Dhami P."/>
            <person name="Davies J."/>
            <person name="Dunn M."/>
            <person name="Earthrowl M.E."/>
            <person name="Ellington A.E."/>
            <person name="Evans K.A."/>
            <person name="Faulkner L."/>
            <person name="Francis M.D."/>
            <person name="Frankish A."/>
            <person name="Frankland J."/>
            <person name="French L."/>
            <person name="Garner P."/>
            <person name="Garnett J."/>
            <person name="Ghori M.J."/>
            <person name="Gilby L.M."/>
            <person name="Gillson C.J."/>
            <person name="Glithero R.J."/>
            <person name="Grafham D.V."/>
            <person name="Grant M."/>
            <person name="Gribble S."/>
            <person name="Griffiths C."/>
            <person name="Griffiths M.N.D."/>
            <person name="Hall R."/>
            <person name="Halls K.S."/>
            <person name="Hammond S."/>
            <person name="Harley J.L."/>
            <person name="Hart E.A."/>
            <person name="Heath P.D."/>
            <person name="Heathcott R."/>
            <person name="Holmes S.J."/>
            <person name="Howden P.J."/>
            <person name="Howe K.L."/>
            <person name="Howell G.R."/>
            <person name="Huckle E."/>
            <person name="Humphray S.J."/>
            <person name="Humphries M.D."/>
            <person name="Hunt A.R."/>
            <person name="Johnson C.M."/>
            <person name="Joy A.A."/>
            <person name="Kay M."/>
            <person name="Keenan S.J."/>
            <person name="Kimberley A.M."/>
            <person name="King A."/>
            <person name="Laird G.K."/>
            <person name="Langford C."/>
            <person name="Lawlor S."/>
            <person name="Leongamornlert D.A."/>
            <person name="Leversha M."/>
            <person name="Lloyd C.R."/>
            <person name="Lloyd D.M."/>
            <person name="Loveland J.E."/>
            <person name="Lovell J."/>
            <person name="Martin S."/>
            <person name="Mashreghi-Mohammadi M."/>
            <person name="Maslen G.L."/>
            <person name="Matthews L."/>
            <person name="McCann O.T."/>
            <person name="McLaren S.J."/>
            <person name="McLay K."/>
            <person name="McMurray A."/>
            <person name="Moore M.J.F."/>
            <person name="Mullikin J.C."/>
            <person name="Niblett D."/>
            <person name="Nickerson T."/>
            <person name="Novik K.L."/>
            <person name="Oliver K."/>
            <person name="Overton-Larty E.K."/>
            <person name="Parker A."/>
            <person name="Patel R."/>
            <person name="Pearce A.V."/>
            <person name="Peck A.I."/>
            <person name="Phillimore B.J.C.T."/>
            <person name="Phillips S."/>
            <person name="Plumb R.W."/>
            <person name="Porter K.M."/>
            <person name="Ramsey Y."/>
            <person name="Ranby S.A."/>
            <person name="Rice C.M."/>
            <person name="Ross M.T."/>
            <person name="Searle S.M."/>
            <person name="Sehra H.K."/>
            <person name="Sheridan E."/>
            <person name="Skuce C.D."/>
            <person name="Smith S."/>
            <person name="Smith M."/>
            <person name="Spraggon L."/>
            <person name="Squares S.L."/>
            <person name="Steward C.A."/>
            <person name="Sycamore N."/>
            <person name="Tamlyn-Hall G."/>
            <person name="Tester J."/>
            <person name="Theaker A.J."/>
            <person name="Thomas D.W."/>
            <person name="Thorpe A."/>
            <person name="Tracey A."/>
            <person name="Tromans A."/>
            <person name="Tubby B."/>
            <person name="Wall M."/>
            <person name="Wallis J.M."/>
            <person name="West A.P."/>
            <person name="White S.S."/>
            <person name="Whitehead S.L."/>
            <person name="Whittaker H."/>
            <person name="Wild A."/>
            <person name="Willey D.J."/>
            <person name="Wilmer T.E."/>
            <person name="Wood J.M."/>
            <person name="Wray P.W."/>
            <person name="Wyatt J.C."/>
            <person name="Young L."/>
            <person name="Younger R.M."/>
            <person name="Bentley D.R."/>
            <person name="Coulson A."/>
            <person name="Durbin R.M."/>
            <person name="Hubbard T."/>
            <person name="Sulston J.E."/>
            <person name="Dunham I."/>
            <person name="Rogers J."/>
            <person name="Beck S."/>
        </authorList>
    </citation>
    <scope>NUCLEOTIDE SEQUENCE [LARGE SCALE GENOMIC DNA]</scope>
</reference>
<reference key="6">
    <citation type="submission" date="2005-07" db="EMBL/GenBank/DDBJ databases">
        <authorList>
            <person name="Mural R.J."/>
            <person name="Istrail S."/>
            <person name="Sutton G.G."/>
            <person name="Florea L."/>
            <person name="Halpern A.L."/>
            <person name="Mobarry C.M."/>
            <person name="Lippert R."/>
            <person name="Walenz B."/>
            <person name="Shatkay H."/>
            <person name="Dew I."/>
            <person name="Miller J.R."/>
            <person name="Flanigan M.J."/>
            <person name="Edwards N.J."/>
            <person name="Bolanos R."/>
            <person name="Fasulo D."/>
            <person name="Halldorsson B.V."/>
            <person name="Hannenhalli S."/>
            <person name="Turner R."/>
            <person name="Yooseph S."/>
            <person name="Lu F."/>
            <person name="Nusskern D.R."/>
            <person name="Shue B.C."/>
            <person name="Zheng X.H."/>
            <person name="Zhong F."/>
            <person name="Delcher A.L."/>
            <person name="Huson D.H."/>
            <person name="Kravitz S.A."/>
            <person name="Mouchard L."/>
            <person name="Reinert K."/>
            <person name="Remington K.A."/>
            <person name="Clark A.G."/>
            <person name="Waterman M.S."/>
            <person name="Eichler E.E."/>
            <person name="Adams M.D."/>
            <person name="Hunkapiller M.W."/>
            <person name="Myers E.W."/>
            <person name="Venter J.C."/>
        </authorList>
    </citation>
    <scope>NUCLEOTIDE SEQUENCE [LARGE SCALE GENOMIC DNA]</scope>
</reference>
<reference key="7">
    <citation type="journal article" date="1990" name="Mol. Cell. Biol.">
        <title>A novel mammalian protein kinase gene (mak) is highly expressed in testicular germ cells at and after meiosis.</title>
        <authorList>
            <person name="Matsushime H."/>
            <person name="Jinno A."/>
            <person name="Takagi N."/>
            <person name="Shibuya M."/>
        </authorList>
    </citation>
    <scope>NUCLEOTIDE SEQUENCE [GENOMIC DNA] OF 121-163</scope>
</reference>
<reference key="8">
    <citation type="journal article" date="2006" name="Cancer Res.">
        <title>Male germ cell-associated kinase, a male-specific kinase regulated by androgen, is a coactivator of androgen receptor in prostate cancer cells.</title>
        <authorList>
            <person name="Ma A.H."/>
            <person name="Xia L."/>
            <person name="Desai S.J."/>
            <person name="Boucher D.L."/>
            <person name="Guan Y."/>
            <person name="Shih H.M."/>
            <person name="Shi X.B."/>
            <person name="deVere White R.W."/>
            <person name="Chen H.W."/>
            <person name="Tepper C.G."/>
            <person name="Kung H.J."/>
        </authorList>
    </citation>
    <scope>FUNCTION</scope>
    <scope>INTERACTION WITH AR</scope>
    <scope>SUBUNIT</scope>
    <scope>SUBCELLULAR LOCATION</scope>
</reference>
<reference key="9">
    <citation type="journal article" date="2012" name="Oncogene">
        <title>Male germ cell-associated kinase is overexpressed in prostate cancer cells and causes mitotic defects via deregulation of APC/C(CDH1).</title>
        <authorList>
            <person name="Wang L.Y."/>
            <person name="Kung H.J."/>
        </authorList>
    </citation>
    <scope>FUNCTION</scope>
    <scope>INTERACTION WITH CDK20 AND FZR1</scope>
    <scope>CATALYTIC ACTIVITY</scope>
    <scope>COFACTOR</scope>
    <scope>SUBCELLULAR LOCATION</scope>
    <scope>PHOSPHORYLATION AT THR-157 AND TYR-159</scope>
    <scope>MUTAGENESIS OF THR-157 AND TYR-159</scope>
</reference>
<reference key="10">
    <citation type="journal article" date="2007" name="Nature">
        <title>Patterns of somatic mutation in human cancer genomes.</title>
        <authorList>
            <person name="Greenman C."/>
            <person name="Stephens P."/>
            <person name="Smith R."/>
            <person name="Dalgliesh G.L."/>
            <person name="Hunter C."/>
            <person name="Bignell G."/>
            <person name="Davies H."/>
            <person name="Teague J."/>
            <person name="Butler A."/>
            <person name="Stevens C."/>
            <person name="Edkins S."/>
            <person name="O'Meara S."/>
            <person name="Vastrik I."/>
            <person name="Schmidt E.E."/>
            <person name="Avis T."/>
            <person name="Barthorpe S."/>
            <person name="Bhamra G."/>
            <person name="Buck G."/>
            <person name="Choudhury B."/>
            <person name="Clements J."/>
            <person name="Cole J."/>
            <person name="Dicks E."/>
            <person name="Forbes S."/>
            <person name="Gray K."/>
            <person name="Halliday K."/>
            <person name="Harrison R."/>
            <person name="Hills K."/>
            <person name="Hinton J."/>
            <person name="Jenkinson A."/>
            <person name="Jones D."/>
            <person name="Menzies A."/>
            <person name="Mironenko T."/>
            <person name="Perry J."/>
            <person name="Raine K."/>
            <person name="Richardson D."/>
            <person name="Shepherd R."/>
            <person name="Small A."/>
            <person name="Tofts C."/>
            <person name="Varian J."/>
            <person name="Webb T."/>
            <person name="West S."/>
            <person name="Widaa S."/>
            <person name="Yates A."/>
            <person name="Cahill D.P."/>
            <person name="Louis D.N."/>
            <person name="Goldstraw P."/>
            <person name="Nicholson A.G."/>
            <person name="Brasseur F."/>
            <person name="Looijenga L."/>
            <person name="Weber B.L."/>
            <person name="Chiew Y.-E."/>
            <person name="DeFazio A."/>
            <person name="Greaves M.F."/>
            <person name="Green A.R."/>
            <person name="Campbell P."/>
            <person name="Birney E."/>
            <person name="Easton D.F."/>
            <person name="Chenevix-Trench G."/>
            <person name="Tan M.-H."/>
            <person name="Khoo S.K."/>
            <person name="Teh B.T."/>
            <person name="Yuen S.T."/>
            <person name="Leung S.Y."/>
            <person name="Wooster R."/>
            <person name="Futreal P.A."/>
            <person name="Stratton M.R."/>
        </authorList>
    </citation>
    <scope>VARIANTS [LARGE SCALE ANALYSIS] VAL-189; PRO-272; SER-384; SER-520 AND LEU-550</scope>
</reference>
<dbReference type="EC" id="2.7.11.1" evidence="5 10"/>
<dbReference type="EMBL" id="AF505623">
    <property type="protein sequence ID" value="AAN16405.1"/>
    <property type="molecule type" value="mRNA"/>
</dbReference>
<dbReference type="EMBL" id="JN226411">
    <property type="protein sequence ID" value="AEL29206.1"/>
    <property type="molecule type" value="mRNA"/>
</dbReference>
<dbReference type="EMBL" id="AB593146">
    <property type="protein sequence ID" value="BAJ84080.1"/>
    <property type="molecule type" value="mRNA"/>
</dbReference>
<dbReference type="EMBL" id="AL024498">
    <property type="status" value="NOT_ANNOTATED_CDS"/>
    <property type="molecule type" value="Genomic_DNA"/>
</dbReference>
<dbReference type="EMBL" id="CH471087">
    <property type="protein sequence ID" value="EAW55283.1"/>
    <property type="molecule type" value="Genomic_DNA"/>
</dbReference>
<dbReference type="EMBL" id="M35863">
    <property type="protein sequence ID" value="AAA36195.1"/>
    <property type="molecule type" value="Genomic_DNA"/>
</dbReference>
<dbReference type="CCDS" id="CCDS4516.1">
    <molecule id="P20794-1"/>
</dbReference>
<dbReference type="CCDS" id="CCDS75398.1">
    <molecule id="P20794-3"/>
</dbReference>
<dbReference type="CCDS" id="CCDS75399.1">
    <molecule id="P20794-2"/>
</dbReference>
<dbReference type="PIR" id="B34711">
    <property type="entry name" value="B34711"/>
</dbReference>
<dbReference type="RefSeq" id="NP_001229314.1">
    <molecule id="P20794-3"/>
    <property type="nucleotide sequence ID" value="NM_001242385.2"/>
</dbReference>
<dbReference type="RefSeq" id="NP_001229886.1">
    <molecule id="P20794-2"/>
    <property type="nucleotide sequence ID" value="NM_001242957.3"/>
</dbReference>
<dbReference type="RefSeq" id="NP_005897.1">
    <molecule id="P20794-1"/>
    <property type="nucleotide sequence ID" value="NM_005906.6"/>
</dbReference>
<dbReference type="RefSeq" id="XP_011512921.1">
    <molecule id="P20794-2"/>
    <property type="nucleotide sequence ID" value="XM_011514619.3"/>
</dbReference>
<dbReference type="RefSeq" id="XP_011512922.1">
    <molecule id="P20794-2"/>
    <property type="nucleotide sequence ID" value="XM_011514620.3"/>
</dbReference>
<dbReference type="RefSeq" id="XP_011512924.1">
    <molecule id="P20794-3"/>
    <property type="nucleotide sequence ID" value="XM_011514622.4"/>
</dbReference>
<dbReference type="RefSeq" id="XP_016866352.1">
    <property type="nucleotide sequence ID" value="XM_017010863.1"/>
</dbReference>
<dbReference type="RefSeq" id="XP_016866353.1">
    <property type="nucleotide sequence ID" value="XM_017010864.1"/>
</dbReference>
<dbReference type="RefSeq" id="XP_054211408.1">
    <molecule id="P20794-2"/>
    <property type="nucleotide sequence ID" value="XM_054355433.1"/>
</dbReference>
<dbReference type="RefSeq" id="XP_054211409.1">
    <molecule id="P20794-2"/>
    <property type="nucleotide sequence ID" value="XM_054355434.1"/>
</dbReference>
<dbReference type="RefSeq" id="XP_054211410.1">
    <molecule id="P20794-3"/>
    <property type="nucleotide sequence ID" value="XM_054355435.1"/>
</dbReference>
<dbReference type="SMR" id="P20794"/>
<dbReference type="BioGRID" id="110291">
    <property type="interactions" value="63"/>
</dbReference>
<dbReference type="CORUM" id="P20794"/>
<dbReference type="FunCoup" id="P20794">
    <property type="interactions" value="867"/>
</dbReference>
<dbReference type="IntAct" id="P20794">
    <property type="interactions" value="35"/>
</dbReference>
<dbReference type="STRING" id="9606.ENSP00000346484"/>
<dbReference type="BindingDB" id="P20794"/>
<dbReference type="ChEMBL" id="CHEMBL1163106"/>
<dbReference type="iPTMnet" id="P20794"/>
<dbReference type="PhosphoSitePlus" id="P20794"/>
<dbReference type="BioMuta" id="MAK"/>
<dbReference type="DMDM" id="13432166"/>
<dbReference type="jPOST" id="P20794"/>
<dbReference type="MassIVE" id="P20794"/>
<dbReference type="PaxDb" id="9606-ENSP00000346484"/>
<dbReference type="PeptideAtlas" id="P20794"/>
<dbReference type="ProteomicsDB" id="53787">
    <molecule id="P20794-1"/>
</dbReference>
<dbReference type="ProteomicsDB" id="53788">
    <molecule id="P20794-2"/>
</dbReference>
<dbReference type="ProteomicsDB" id="53789">
    <molecule id="P20794-3"/>
</dbReference>
<dbReference type="Antibodypedia" id="24855">
    <property type="antibodies" value="444 antibodies from 30 providers"/>
</dbReference>
<dbReference type="DNASU" id="4117"/>
<dbReference type="Ensembl" id="ENST00000313243.6">
    <molecule id="P20794-1"/>
    <property type="protein sequence ID" value="ENSP00000313021.2"/>
    <property type="gene ID" value="ENSG00000111837.12"/>
</dbReference>
<dbReference type="Ensembl" id="ENST00000354489.7">
    <molecule id="P20794-2"/>
    <property type="protein sequence ID" value="ENSP00000346484.3"/>
    <property type="gene ID" value="ENSG00000111837.12"/>
</dbReference>
<dbReference type="Ensembl" id="ENST00000474039.5">
    <molecule id="P20794-1"/>
    <property type="protein sequence ID" value="ENSP00000476067.1"/>
    <property type="gene ID" value="ENSG00000111837.12"/>
</dbReference>
<dbReference type="Ensembl" id="ENST00000536370.6">
    <molecule id="P20794-3"/>
    <property type="protein sequence ID" value="ENSP00000442221.2"/>
    <property type="gene ID" value="ENSG00000111837.12"/>
</dbReference>
<dbReference type="GeneID" id="4117"/>
<dbReference type="KEGG" id="hsa:4117"/>
<dbReference type="MANE-Select" id="ENST00000354489.7">
    <molecule id="P20794-2"/>
    <property type="protein sequence ID" value="ENSP00000346484.3"/>
    <property type="RefSeq nucleotide sequence ID" value="NM_001242957.3"/>
    <property type="RefSeq protein sequence ID" value="NP_001229886.1"/>
</dbReference>
<dbReference type="UCSC" id="uc003mzm.4">
    <molecule id="P20794-1"/>
    <property type="organism name" value="human"/>
</dbReference>
<dbReference type="AGR" id="HGNC:6816"/>
<dbReference type="CTD" id="4117"/>
<dbReference type="DisGeNET" id="4117"/>
<dbReference type="GeneCards" id="MAK"/>
<dbReference type="GeneReviews" id="MAK"/>
<dbReference type="HGNC" id="HGNC:6816">
    <property type="gene designation" value="MAK"/>
</dbReference>
<dbReference type="HPA" id="ENSG00000111837">
    <property type="expression patterns" value="Tissue enriched (retina)"/>
</dbReference>
<dbReference type="MalaCards" id="MAK"/>
<dbReference type="MIM" id="154235">
    <property type="type" value="gene"/>
</dbReference>
<dbReference type="MIM" id="614181">
    <property type="type" value="phenotype"/>
</dbReference>
<dbReference type="neXtProt" id="NX_P20794"/>
<dbReference type="OpenTargets" id="ENSG00000111837"/>
<dbReference type="Orphanet" id="791">
    <property type="disease" value="Retinitis pigmentosa"/>
</dbReference>
<dbReference type="PharmGKB" id="PA30564"/>
<dbReference type="VEuPathDB" id="HostDB:ENSG00000111837"/>
<dbReference type="eggNOG" id="KOG0661">
    <property type="taxonomic scope" value="Eukaryota"/>
</dbReference>
<dbReference type="GeneTree" id="ENSGT00940000156581"/>
<dbReference type="InParanoid" id="P20794"/>
<dbReference type="OMA" id="MASEYTW"/>
<dbReference type="OrthoDB" id="2158884at2759"/>
<dbReference type="PAN-GO" id="P20794">
    <property type="GO annotations" value="7 GO annotations based on evolutionary models"/>
</dbReference>
<dbReference type="PhylomeDB" id="P20794"/>
<dbReference type="TreeFam" id="TF328769"/>
<dbReference type="BRENDA" id="2.7.11.22">
    <property type="organism ID" value="2681"/>
</dbReference>
<dbReference type="PathwayCommons" id="P20794"/>
<dbReference type="SignaLink" id="P20794"/>
<dbReference type="SIGNOR" id="P20794"/>
<dbReference type="BioGRID-ORCS" id="4117">
    <property type="hits" value="19 hits in 1184 CRISPR screens"/>
</dbReference>
<dbReference type="ChiTaRS" id="MAK">
    <property type="organism name" value="human"/>
</dbReference>
<dbReference type="GeneWiki" id="MAK_(gene)"/>
<dbReference type="GenomeRNAi" id="4117"/>
<dbReference type="Pharos" id="P20794">
    <property type="development level" value="Tchem"/>
</dbReference>
<dbReference type="PRO" id="PR:P20794"/>
<dbReference type="Proteomes" id="UP000005640">
    <property type="component" value="Chromosome 6"/>
</dbReference>
<dbReference type="RNAct" id="P20794">
    <property type="molecule type" value="protein"/>
</dbReference>
<dbReference type="Bgee" id="ENSG00000111837">
    <property type="expression patterns" value="Expressed in sperm and 117 other cell types or tissues"/>
</dbReference>
<dbReference type="ExpressionAtlas" id="P20794">
    <property type="expression patterns" value="baseline and differential"/>
</dbReference>
<dbReference type="GO" id="GO:0005930">
    <property type="term" value="C:axoneme"/>
    <property type="evidence" value="ECO:0007669"/>
    <property type="project" value="Ensembl"/>
</dbReference>
<dbReference type="GO" id="GO:0005813">
    <property type="term" value="C:centrosome"/>
    <property type="evidence" value="ECO:0000314"/>
    <property type="project" value="UniProtKB"/>
</dbReference>
<dbReference type="GO" id="GO:0036064">
    <property type="term" value="C:ciliary basal body"/>
    <property type="evidence" value="ECO:0000314"/>
    <property type="project" value="HPA"/>
</dbReference>
<dbReference type="GO" id="GO:0005929">
    <property type="term" value="C:cilium"/>
    <property type="evidence" value="ECO:0000318"/>
    <property type="project" value="GO_Central"/>
</dbReference>
<dbReference type="GO" id="GO:0005737">
    <property type="term" value="C:cytoplasm"/>
    <property type="evidence" value="ECO:0000318"/>
    <property type="project" value="GO_Central"/>
</dbReference>
<dbReference type="GO" id="GO:0005829">
    <property type="term" value="C:cytosol"/>
    <property type="evidence" value="ECO:0000314"/>
    <property type="project" value="HPA"/>
</dbReference>
<dbReference type="GO" id="GO:0030496">
    <property type="term" value="C:midbody"/>
    <property type="evidence" value="ECO:0000314"/>
    <property type="project" value="UniProtKB"/>
</dbReference>
<dbReference type="GO" id="GO:0072686">
    <property type="term" value="C:mitotic spindle"/>
    <property type="evidence" value="ECO:0000314"/>
    <property type="project" value="UniProtKB"/>
</dbReference>
<dbReference type="GO" id="GO:0031514">
    <property type="term" value="C:motile cilium"/>
    <property type="evidence" value="ECO:0007669"/>
    <property type="project" value="Ensembl"/>
</dbReference>
<dbReference type="GO" id="GO:0005730">
    <property type="term" value="C:nucleolus"/>
    <property type="evidence" value="ECO:0000314"/>
    <property type="project" value="HPA"/>
</dbReference>
<dbReference type="GO" id="GO:0005654">
    <property type="term" value="C:nucleoplasm"/>
    <property type="evidence" value="ECO:0000314"/>
    <property type="project" value="HPA"/>
</dbReference>
<dbReference type="GO" id="GO:0005634">
    <property type="term" value="C:nucleus"/>
    <property type="evidence" value="ECO:0000314"/>
    <property type="project" value="UniProtKB"/>
</dbReference>
<dbReference type="GO" id="GO:0032391">
    <property type="term" value="C:photoreceptor connecting cilium"/>
    <property type="evidence" value="ECO:0007669"/>
    <property type="project" value="Ensembl"/>
</dbReference>
<dbReference type="GO" id="GO:0001917">
    <property type="term" value="C:photoreceptor inner segment"/>
    <property type="evidence" value="ECO:0000314"/>
    <property type="project" value="UniProtKB"/>
</dbReference>
<dbReference type="GO" id="GO:0001750">
    <property type="term" value="C:photoreceptor outer segment"/>
    <property type="evidence" value="ECO:0000250"/>
    <property type="project" value="UniProtKB"/>
</dbReference>
<dbReference type="GO" id="GO:0005886">
    <property type="term" value="C:plasma membrane"/>
    <property type="evidence" value="ECO:0000314"/>
    <property type="project" value="HPA"/>
</dbReference>
<dbReference type="GO" id="GO:0005524">
    <property type="term" value="F:ATP binding"/>
    <property type="evidence" value="ECO:0007669"/>
    <property type="project" value="UniProtKB-KW"/>
</dbReference>
<dbReference type="GO" id="GO:0046872">
    <property type="term" value="F:metal ion binding"/>
    <property type="evidence" value="ECO:0007669"/>
    <property type="project" value="UniProtKB-KW"/>
</dbReference>
<dbReference type="GO" id="GO:0004672">
    <property type="term" value="F:protein kinase activity"/>
    <property type="evidence" value="ECO:0000303"/>
    <property type="project" value="UniProtKB"/>
</dbReference>
<dbReference type="GO" id="GO:0106310">
    <property type="term" value="F:protein serine kinase activity"/>
    <property type="evidence" value="ECO:0007669"/>
    <property type="project" value="RHEA"/>
</dbReference>
<dbReference type="GO" id="GO:0004674">
    <property type="term" value="F:protein serine/threonine kinase activity"/>
    <property type="evidence" value="ECO:0000318"/>
    <property type="project" value="GO_Central"/>
</dbReference>
<dbReference type="GO" id="GO:0003713">
    <property type="term" value="F:transcription coactivator activity"/>
    <property type="evidence" value="ECO:0000314"/>
    <property type="project" value="UniProtKB"/>
</dbReference>
<dbReference type="GO" id="GO:0030154">
    <property type="term" value="P:cell differentiation"/>
    <property type="evidence" value="ECO:0007669"/>
    <property type="project" value="UniProtKB-KW"/>
</dbReference>
<dbReference type="GO" id="GO:0060271">
    <property type="term" value="P:cilium assembly"/>
    <property type="evidence" value="ECO:0000318"/>
    <property type="project" value="GO_Central"/>
</dbReference>
<dbReference type="GO" id="GO:0035556">
    <property type="term" value="P:intracellular signal transduction"/>
    <property type="evidence" value="ECO:0000318"/>
    <property type="project" value="GO_Central"/>
</dbReference>
<dbReference type="GO" id="GO:0042073">
    <property type="term" value="P:intraciliary transport"/>
    <property type="evidence" value="ECO:0000318"/>
    <property type="project" value="GO_Central"/>
</dbReference>
<dbReference type="GO" id="GO:1902856">
    <property type="term" value="P:negative regulation of non-motile cilium assembly"/>
    <property type="evidence" value="ECO:0007669"/>
    <property type="project" value="Ensembl"/>
</dbReference>
<dbReference type="GO" id="GO:1905515">
    <property type="term" value="P:non-motile cilium assembly"/>
    <property type="evidence" value="ECO:0007669"/>
    <property type="project" value="Ensembl"/>
</dbReference>
<dbReference type="GO" id="GO:0045494">
    <property type="term" value="P:photoreceptor cell maintenance"/>
    <property type="evidence" value="ECO:0000250"/>
    <property type="project" value="UniProtKB"/>
</dbReference>
<dbReference type="GO" id="GO:0046777">
    <property type="term" value="P:protein autophosphorylation"/>
    <property type="evidence" value="ECO:0000315"/>
    <property type="project" value="UniProtKB"/>
</dbReference>
<dbReference type="GO" id="GO:0006468">
    <property type="term" value="P:protein phosphorylation"/>
    <property type="evidence" value="ECO:0000314"/>
    <property type="project" value="UniProtKB"/>
</dbReference>
<dbReference type="GO" id="GO:0007283">
    <property type="term" value="P:spermatogenesis"/>
    <property type="evidence" value="ECO:0000303"/>
    <property type="project" value="UniProtKB"/>
</dbReference>
<dbReference type="CDD" id="cd07830">
    <property type="entry name" value="STKc_MAK_like"/>
    <property type="match status" value="1"/>
</dbReference>
<dbReference type="FunFam" id="1.10.510.10:FF:000104">
    <property type="entry name" value="serine/threonine-protein kinase MAK isoform X1"/>
    <property type="match status" value="1"/>
</dbReference>
<dbReference type="FunFam" id="3.30.200.20:FF:000071">
    <property type="entry name" value="serine/threonine-protein kinase MAK isoform X1"/>
    <property type="match status" value="1"/>
</dbReference>
<dbReference type="Gene3D" id="3.30.200.20">
    <property type="entry name" value="Phosphorylase Kinase, domain 1"/>
    <property type="match status" value="1"/>
</dbReference>
<dbReference type="Gene3D" id="1.10.510.10">
    <property type="entry name" value="Transferase(Phosphotransferase) domain 1"/>
    <property type="match status" value="1"/>
</dbReference>
<dbReference type="InterPro" id="IPR011009">
    <property type="entry name" value="Kinase-like_dom_sf"/>
</dbReference>
<dbReference type="InterPro" id="IPR050117">
    <property type="entry name" value="MAP_kinase"/>
</dbReference>
<dbReference type="InterPro" id="IPR000719">
    <property type="entry name" value="Prot_kinase_dom"/>
</dbReference>
<dbReference type="InterPro" id="IPR017441">
    <property type="entry name" value="Protein_kinase_ATP_BS"/>
</dbReference>
<dbReference type="InterPro" id="IPR008271">
    <property type="entry name" value="Ser/Thr_kinase_AS"/>
</dbReference>
<dbReference type="PANTHER" id="PTHR24055">
    <property type="entry name" value="MITOGEN-ACTIVATED PROTEIN KINASE"/>
    <property type="match status" value="1"/>
</dbReference>
<dbReference type="Pfam" id="PF00069">
    <property type="entry name" value="Pkinase"/>
    <property type="match status" value="1"/>
</dbReference>
<dbReference type="SMART" id="SM00220">
    <property type="entry name" value="S_TKc"/>
    <property type="match status" value="1"/>
</dbReference>
<dbReference type="SUPFAM" id="SSF56112">
    <property type="entry name" value="Protein kinase-like (PK-like)"/>
    <property type="match status" value="1"/>
</dbReference>
<dbReference type="PROSITE" id="PS00107">
    <property type="entry name" value="PROTEIN_KINASE_ATP"/>
    <property type="match status" value="1"/>
</dbReference>
<dbReference type="PROSITE" id="PS50011">
    <property type="entry name" value="PROTEIN_KINASE_DOM"/>
    <property type="match status" value="1"/>
</dbReference>
<dbReference type="PROSITE" id="PS00108">
    <property type="entry name" value="PROTEIN_KINASE_ST"/>
    <property type="match status" value="1"/>
</dbReference>
<keyword id="KW-0025">Alternative splicing</keyword>
<keyword id="KW-0067">ATP-binding</keyword>
<keyword id="KW-0966">Cell projection</keyword>
<keyword id="KW-0969">Cilium</keyword>
<keyword id="KW-0963">Cytoplasm</keyword>
<keyword id="KW-0206">Cytoskeleton</keyword>
<keyword id="KW-0217">Developmental protein</keyword>
<keyword id="KW-0221">Differentiation</keyword>
<keyword id="KW-0225">Disease variant</keyword>
<keyword id="KW-0418">Kinase</keyword>
<keyword id="KW-0460">Magnesium</keyword>
<keyword id="KW-0479">Metal-binding</keyword>
<keyword id="KW-0547">Nucleotide-binding</keyword>
<keyword id="KW-0539">Nucleus</keyword>
<keyword id="KW-0597">Phosphoprotein</keyword>
<keyword id="KW-1267">Proteomics identification</keyword>
<keyword id="KW-1185">Reference proteome</keyword>
<keyword id="KW-0682">Retinitis pigmentosa</keyword>
<keyword id="KW-0723">Serine/threonine-protein kinase</keyword>
<keyword id="KW-0744">Spermatogenesis</keyword>
<keyword id="KW-0804">Transcription</keyword>
<keyword id="KW-0805">Transcription regulation</keyword>
<keyword id="KW-0808">Transferase</keyword>
<evidence type="ECO:0000250" key="1"/>
<evidence type="ECO:0000255" key="2">
    <source>
        <dbReference type="PROSITE-ProRule" id="PRU00159"/>
    </source>
</evidence>
<evidence type="ECO:0000255" key="3">
    <source>
        <dbReference type="PROSITE-ProRule" id="PRU10027"/>
    </source>
</evidence>
<evidence type="ECO:0000256" key="4">
    <source>
        <dbReference type="SAM" id="MobiDB-lite"/>
    </source>
</evidence>
<evidence type="ECO:0000269" key="5">
    <source>
    </source>
</evidence>
<evidence type="ECO:0000269" key="6">
    <source>
    </source>
</evidence>
<evidence type="ECO:0000269" key="7">
    <source>
    </source>
</evidence>
<evidence type="ECO:0000269" key="8">
    <source>
    </source>
</evidence>
<evidence type="ECO:0000269" key="9">
    <source>
    </source>
</evidence>
<evidence type="ECO:0000269" key="10">
    <source>
    </source>
</evidence>
<evidence type="ECO:0000303" key="11">
    <source>
    </source>
</evidence>
<evidence type="ECO:0000303" key="12">
    <source>
    </source>
</evidence>
<evidence type="ECO:0000303" key="13">
    <source>
    </source>
</evidence>
<evidence type="ECO:0000305" key="14"/>
<feature type="chain" id="PRO_0000086284" description="Serine/threonine-protein kinase MAK">
    <location>
        <begin position="1"/>
        <end position="623"/>
    </location>
</feature>
<feature type="domain" description="Protein kinase" evidence="2">
    <location>
        <begin position="4"/>
        <end position="284"/>
    </location>
</feature>
<feature type="region of interest" description="Disordered" evidence="4">
    <location>
        <begin position="328"/>
        <end position="396"/>
    </location>
</feature>
<feature type="region of interest" description="Disordered" evidence="4">
    <location>
        <begin position="416"/>
        <end position="469"/>
    </location>
</feature>
<feature type="compositionally biased region" description="Low complexity" evidence="4">
    <location>
        <begin position="356"/>
        <end position="369"/>
    </location>
</feature>
<feature type="compositionally biased region" description="Polar residues" evidence="4">
    <location>
        <begin position="446"/>
        <end position="455"/>
    </location>
</feature>
<feature type="active site" description="Proton acceptor" evidence="2 3">
    <location>
        <position position="125"/>
    </location>
</feature>
<feature type="binding site" evidence="2">
    <location>
        <begin position="10"/>
        <end position="18"/>
    </location>
    <ligand>
        <name>ATP</name>
        <dbReference type="ChEBI" id="CHEBI:30616"/>
    </ligand>
</feature>
<feature type="binding site" evidence="2">
    <location>
        <position position="33"/>
    </location>
    <ligand>
        <name>ATP</name>
        <dbReference type="ChEBI" id="CHEBI:30616"/>
    </ligand>
</feature>
<feature type="modified residue" description="Phosphothreonine; by autocatalysis" evidence="10">
    <location>
        <position position="157"/>
    </location>
</feature>
<feature type="modified residue" description="Phosphotyrosine; by autocatalysis" evidence="10">
    <location>
        <position position="159"/>
    </location>
</feature>
<feature type="splice variant" id="VSP_042470" description="In isoform 2." evidence="12 13">
    <original>A</original>
    <variation>AEESIIKPIEKLSCNETFPEKLEDPQ</variation>
    <location>
        <position position="532"/>
    </location>
</feature>
<feature type="splice variant" id="VSP_042471" description="In isoform 3." evidence="11">
    <location>
        <begin position="533"/>
        <end position="572"/>
    </location>
</feature>
<feature type="sequence variant" id="VAR_066988" description="In RP62; results in a complete loss of kinase activity compared to wild-type; dbSNP:rs387906647." evidence="9">
    <original>G</original>
    <variation>S</variation>
    <location>
        <position position="13"/>
    </location>
</feature>
<feature type="sequence variant" id="VAR_066989" description="In RP62; dbSNP:rs754916169." evidence="9">
    <original>G</original>
    <variation>R</variation>
    <location>
        <position position="27"/>
    </location>
</feature>
<feature type="sequence variant" id="VAR_066990" description="In RP62; results in a complete loss of kinase activity compared to wild-type; dbSNP:rs387906646." evidence="9">
    <original>N</original>
    <variation>H</variation>
    <location>
        <position position="130"/>
    </location>
</feature>
<feature type="sequence variant" id="VAR_066991" description="In RP62; dbSNP:rs387906648." evidence="9">
    <original>R</original>
    <variation>H</variation>
    <location>
        <position position="166"/>
    </location>
</feature>
<feature type="sequence variant" id="VAR_066992" description="In RP62; dbSNP:rs750559316." evidence="9">
    <original>I</original>
    <variation>T</variation>
    <location>
        <position position="181"/>
    </location>
</feature>
<feature type="sequence variant" id="VAR_042006" description="In dbSNP:rs56215624." evidence="7">
    <original>I</original>
    <variation>V</variation>
    <location>
        <position position="189"/>
    </location>
</feature>
<feature type="sequence variant" id="VAR_042007" description="In a breast infiltrating ductal carcinoma sample; somatic mutation." evidence="7">
    <original>R</original>
    <variation>P</variation>
    <location>
        <position position="272"/>
    </location>
</feature>
<feature type="sequence variant" id="VAR_066993" description="In dbSNP:rs371971492." evidence="9">
    <original>P</original>
    <variation>L</variation>
    <location>
        <position position="325"/>
    </location>
</feature>
<feature type="sequence variant" id="VAR_053932" description="In dbSNP:rs17579447.">
    <original>D</original>
    <variation>E</variation>
    <location>
        <position position="329"/>
    </location>
</feature>
<feature type="sequence variant" id="VAR_042008" description="In dbSNP:rs55773478." evidence="7">
    <original>N</original>
    <variation>S</variation>
    <location>
        <position position="384"/>
    </location>
</feature>
<feature type="sequence variant" id="VAR_042009" description="In dbSNP:rs567083." evidence="7">
    <original>P</original>
    <variation>S</variation>
    <location>
        <position position="520"/>
    </location>
</feature>
<feature type="sequence variant" id="VAR_042010" description="In dbSNP:rs56217305." evidence="7">
    <original>F</original>
    <variation>L</variation>
    <location>
        <position position="550"/>
    </location>
</feature>
<feature type="mutagenesis site" description="Abolishes autophosphorylation." evidence="5">
    <original>K</original>
    <variation>R</variation>
    <location>
        <position position="33"/>
    </location>
</feature>
<feature type="mutagenesis site" description="Abolishes autophosphorylation and impairs kinase activity." evidence="10">
    <original>T</original>
    <variation>A</variation>
    <location>
        <position position="157"/>
    </location>
</feature>
<feature type="mutagenesis site" description="Abolishes autophosphorylation and impairs kinase activity." evidence="10">
    <original>Y</original>
    <variation>F</variation>
    <location>
        <position position="159"/>
    </location>
</feature>
<sequence length="623" mass="70581">MNRYTTMRQLGDGTYGSVLMGKSNESGELVAIKRMKRKFYSWDECMNLREVKSLKKLNHANVIKLKEVIRENDHLYFIFEYMKENLYQLMKDRNKLFPESVIRNIMYQILQGLAFIHKHGFFHRDMKPENLLCMGPELVKIADFGLARELRSQPPYTDYVSTRWYRAPEVLLRSSVYSSPIDVWAVGSIMAELYMLRPLFPGTSEVDEIFKICQVLGTPKKSDWPEGYQLASSMNFRFPQCVPINLKTLIPNASNEAIQLMTEMLNWDPKKRPTASQALKHPYFQVGQVLGPSSNHLESKQSLNKQLQPLESKPSLVEVEPKPLPDIIDQVVGQPQPKTSQQPLQPIQPPQNLSVQQPPKQQSQEKPPQTLFPSIVKNMPTKPNGTLSHKSGRRRWGQTIFKSGDSWEELEDYDFGASHSKKPSMGVFKEKRKKDSPFRLPEPVPSGSNHSTGENKSLPAVTSLKSDSELSTAPTSKQYYLKQSRYLPGVNPKKVSLIASGKEINPHTWSNQLFPKSLGPVGAELAFKRSNAGNLGSYATYNQSGYIPSFLKKEVQSAGQRIHLAPLNATASEYTWNTKTGRGQFSGRTYNPTAKNLNIVNRAQPIPSVHGRTDWVAKYGGHR</sequence>
<organism>
    <name type="scientific">Homo sapiens</name>
    <name type="common">Human</name>
    <dbReference type="NCBI Taxonomy" id="9606"/>
    <lineage>
        <taxon>Eukaryota</taxon>
        <taxon>Metazoa</taxon>
        <taxon>Chordata</taxon>
        <taxon>Craniata</taxon>
        <taxon>Vertebrata</taxon>
        <taxon>Euteleostomi</taxon>
        <taxon>Mammalia</taxon>
        <taxon>Eutheria</taxon>
        <taxon>Euarchontoglires</taxon>
        <taxon>Primates</taxon>
        <taxon>Haplorrhini</taxon>
        <taxon>Catarrhini</taxon>
        <taxon>Hominidae</taxon>
        <taxon>Homo</taxon>
    </lineage>
</organism>
<comment type="function">
    <text evidence="1 5 6 10">Essential for the regulation of ciliary length and required for the long-term survival of photoreceptors (By similarity). Phosphorylates FZR1 in a cell cycle-dependent manner. Plays a role in the transcriptional coactivation of AR. Could play an important function in spermatogenesis. May play a role in chromosomal stability in prostate cancer cells.</text>
</comment>
<comment type="catalytic activity">
    <reaction evidence="5 10">
        <text>L-seryl-[protein] + ATP = O-phospho-L-seryl-[protein] + ADP + H(+)</text>
        <dbReference type="Rhea" id="RHEA:17989"/>
        <dbReference type="Rhea" id="RHEA-COMP:9863"/>
        <dbReference type="Rhea" id="RHEA-COMP:11604"/>
        <dbReference type="ChEBI" id="CHEBI:15378"/>
        <dbReference type="ChEBI" id="CHEBI:29999"/>
        <dbReference type="ChEBI" id="CHEBI:30616"/>
        <dbReference type="ChEBI" id="CHEBI:83421"/>
        <dbReference type="ChEBI" id="CHEBI:456216"/>
        <dbReference type="EC" id="2.7.11.1"/>
    </reaction>
</comment>
<comment type="catalytic activity">
    <reaction evidence="5 10">
        <text>L-threonyl-[protein] + ATP = O-phospho-L-threonyl-[protein] + ADP + H(+)</text>
        <dbReference type="Rhea" id="RHEA:46608"/>
        <dbReference type="Rhea" id="RHEA-COMP:11060"/>
        <dbReference type="Rhea" id="RHEA-COMP:11605"/>
        <dbReference type="ChEBI" id="CHEBI:15378"/>
        <dbReference type="ChEBI" id="CHEBI:30013"/>
        <dbReference type="ChEBI" id="CHEBI:30616"/>
        <dbReference type="ChEBI" id="CHEBI:61977"/>
        <dbReference type="ChEBI" id="CHEBI:456216"/>
        <dbReference type="EC" id="2.7.11.1"/>
    </reaction>
</comment>
<comment type="cofactor">
    <cofactor evidence="5 10">
        <name>Mg(2+)</name>
        <dbReference type="ChEBI" id="CHEBI:18420"/>
    </cofactor>
</comment>
<comment type="subunit">
    <text evidence="1 6 10">Interacts with RP1 (By similarity). Interacts with AR and CDK20. Found in a complex containing MAK, AR and NCOA3. Interacts with FZR1 (via WD repeats).</text>
</comment>
<comment type="interaction">
    <interactant intactId="EBI-3911321">
        <id>P20794</id>
    </interactant>
    <interactant intactId="EBI-608057">
        <id>P10275</id>
        <label>AR</label>
    </interactant>
    <organismsDiffer>false</organismsDiffer>
    <experiments>5</experiments>
</comment>
<comment type="interaction">
    <interactant intactId="EBI-3911321">
        <id>P20794</id>
    </interactant>
    <interactant intactId="EBI-724997">
        <id>Q9UM11</id>
        <label>FZR1</label>
    </interactant>
    <organismsDiffer>false</organismsDiffer>
    <experiments>7</experiments>
</comment>
<comment type="subcellular location">
    <subcellularLocation>
        <location>Nucleus</location>
    </subcellularLocation>
    <subcellularLocation>
        <location>Cytoplasm</location>
        <location>Cytoskeleton</location>
        <location>Microtubule organizing center</location>
        <location>Centrosome</location>
    </subcellularLocation>
    <subcellularLocation>
        <location>Cytoplasm</location>
        <location>Cytoskeleton</location>
        <location>Spindle</location>
    </subcellularLocation>
    <subcellularLocation>
        <location>Midbody</location>
    </subcellularLocation>
    <subcellularLocation>
        <location evidence="1">Cell projection</location>
        <location evidence="1">Cilium</location>
        <location evidence="1">Photoreceptor outer segment</location>
    </subcellularLocation>
    <subcellularLocation>
        <location>Photoreceptor inner segment</location>
    </subcellularLocation>
    <text evidence="1">Localized in both the connecting cilia and the outer segment axonemes (By similarity). Localized uniformly in nuclei during interphase, to the mitotic spindle and centrosomes during metaphase and anaphase, and also to midbody at anaphase until telophase.</text>
</comment>
<comment type="alternative products">
    <event type="alternative splicing"/>
    <isoform>
        <id>P20794-1</id>
        <name>1</name>
        <sequence type="displayed"/>
    </isoform>
    <isoform>
        <id>P20794-2</id>
        <name>2</name>
        <sequence type="described" ref="VSP_042470"/>
    </isoform>
    <isoform>
        <id>P20794-3</id>
        <name>3</name>
        <sequence type="described" ref="VSP_042471"/>
    </isoform>
</comment>
<comment type="tissue specificity">
    <text evidence="5 8">Expressed in prostate cancer cell lines at generally higher levels than in normal prostate epithelial cell lines. Isoform 1 is expressed in kidney, testis, lung, trachea, and retina. Isoform 2 is retina-specific where it is expressed in rod and cone photoreceptors.</text>
</comment>
<comment type="induction">
    <text evidence="5">Up-regulated by dihydrotestosterone (DHT) in androgen-sensitive LNCaP prostate cancer cells in a dose-dependent manner. Up-regulation by DHT is transient, reaching maximum levels after 24 hours and decreases slightly after 48 hours.</text>
</comment>
<comment type="PTM">
    <text evidence="5 10">Autophosphorylated. Phosphorylated on serine and threonine residues.</text>
</comment>
<comment type="disease" evidence="8 9">
    <disease id="DI-03235">
        <name>Retinitis pigmentosa 62</name>
        <acronym>RP62</acronym>
        <description>A retinal dystrophy belonging to the group of pigmentary retinopathies. Retinitis pigmentosa is characterized by retinal pigment deposits visible on fundus examination and primary loss of rod photoreceptor cells followed by secondary loss of cone photoreceptors. Patients typically have night vision blindness and loss of midperipheral visual field. As their condition progresses, they lose their far peripheral visual field and eventually central vision as well.</description>
        <dbReference type="MIM" id="614181"/>
    </disease>
    <text>The disease is caused by variants affecting the gene represented in this entry.</text>
</comment>
<comment type="similarity">
    <text evidence="14">Belongs to the protein kinase superfamily. CMGC Ser/Thr protein kinase family. CDC2/CDKX subfamily.</text>
</comment>
<proteinExistence type="evidence at protein level"/>
<accession>P20794</accession>
<accession>F1T0K6</accession>
<accession>G1FL29</accession>
<accession>Q547D0</accession>
<accession>Q9NUH7</accession>